<proteinExistence type="inferred from homology"/>
<organism>
    <name type="scientific">Agrobacterium fabrum (strain C58 / ATCC 33970)</name>
    <name type="common">Agrobacterium tumefaciens (strain C58)</name>
    <dbReference type="NCBI Taxonomy" id="176299"/>
    <lineage>
        <taxon>Bacteria</taxon>
        <taxon>Pseudomonadati</taxon>
        <taxon>Pseudomonadota</taxon>
        <taxon>Alphaproteobacteria</taxon>
        <taxon>Hyphomicrobiales</taxon>
        <taxon>Rhizobiaceae</taxon>
        <taxon>Rhizobium/Agrobacterium group</taxon>
        <taxon>Agrobacterium</taxon>
        <taxon>Agrobacterium tumefaciens complex</taxon>
    </lineage>
</organism>
<reference key="1">
    <citation type="journal article" date="2001" name="Science">
        <title>The genome of the natural genetic engineer Agrobacterium tumefaciens C58.</title>
        <authorList>
            <person name="Wood D.W."/>
            <person name="Setubal J.C."/>
            <person name="Kaul R."/>
            <person name="Monks D.E."/>
            <person name="Kitajima J.P."/>
            <person name="Okura V.K."/>
            <person name="Zhou Y."/>
            <person name="Chen L."/>
            <person name="Wood G.E."/>
            <person name="Almeida N.F. Jr."/>
            <person name="Woo L."/>
            <person name="Chen Y."/>
            <person name="Paulsen I.T."/>
            <person name="Eisen J.A."/>
            <person name="Karp P.D."/>
            <person name="Bovee D. Sr."/>
            <person name="Chapman P."/>
            <person name="Clendenning J."/>
            <person name="Deatherage G."/>
            <person name="Gillet W."/>
            <person name="Grant C."/>
            <person name="Kutyavin T."/>
            <person name="Levy R."/>
            <person name="Li M.-J."/>
            <person name="McClelland E."/>
            <person name="Palmieri A."/>
            <person name="Raymond C."/>
            <person name="Rouse G."/>
            <person name="Saenphimmachak C."/>
            <person name="Wu Z."/>
            <person name="Romero P."/>
            <person name="Gordon D."/>
            <person name="Zhang S."/>
            <person name="Yoo H."/>
            <person name="Tao Y."/>
            <person name="Biddle P."/>
            <person name="Jung M."/>
            <person name="Krespan W."/>
            <person name="Perry M."/>
            <person name="Gordon-Kamm B."/>
            <person name="Liao L."/>
            <person name="Kim S."/>
            <person name="Hendrick C."/>
            <person name="Zhao Z.-Y."/>
            <person name="Dolan M."/>
            <person name="Chumley F."/>
            <person name="Tingey S.V."/>
            <person name="Tomb J.-F."/>
            <person name="Gordon M.P."/>
            <person name="Olson M.V."/>
            <person name="Nester E.W."/>
        </authorList>
    </citation>
    <scope>NUCLEOTIDE SEQUENCE [LARGE SCALE GENOMIC DNA]</scope>
    <source>
        <strain>C58 / ATCC 33970</strain>
    </source>
</reference>
<reference key="2">
    <citation type="journal article" date="2001" name="Science">
        <title>Genome sequence of the plant pathogen and biotechnology agent Agrobacterium tumefaciens C58.</title>
        <authorList>
            <person name="Goodner B."/>
            <person name="Hinkle G."/>
            <person name="Gattung S."/>
            <person name="Miller N."/>
            <person name="Blanchard M."/>
            <person name="Qurollo B."/>
            <person name="Goldman B.S."/>
            <person name="Cao Y."/>
            <person name="Askenazi M."/>
            <person name="Halling C."/>
            <person name="Mullin L."/>
            <person name="Houmiel K."/>
            <person name="Gordon J."/>
            <person name="Vaudin M."/>
            <person name="Iartchouk O."/>
            <person name="Epp A."/>
            <person name="Liu F."/>
            <person name="Wollam C."/>
            <person name="Allinger M."/>
            <person name="Doughty D."/>
            <person name="Scott C."/>
            <person name="Lappas C."/>
            <person name="Markelz B."/>
            <person name="Flanagan C."/>
            <person name="Crowell C."/>
            <person name="Gurson J."/>
            <person name="Lomo C."/>
            <person name="Sear C."/>
            <person name="Strub G."/>
            <person name="Cielo C."/>
            <person name="Slater S."/>
        </authorList>
    </citation>
    <scope>NUCLEOTIDE SEQUENCE [LARGE SCALE GENOMIC DNA]</scope>
    <source>
        <strain>C58 / ATCC 33970</strain>
    </source>
</reference>
<evidence type="ECO:0000255" key="1">
    <source>
        <dbReference type="HAMAP-Rule" id="MF_00298"/>
    </source>
</evidence>
<accession>Q8UBS8</accession>
<keyword id="KW-0378">Hydrolase</keyword>
<keyword id="KW-1185">Reference proteome</keyword>
<gene>
    <name evidence="1" type="primary">rppH</name>
    <name type="synonym">ialA</name>
    <name evidence="1" type="synonym">nudH</name>
    <name type="ordered locus">Atu2772</name>
    <name type="ORF">AGR_C_5030</name>
</gene>
<name>RPPH_AGRFC</name>
<comment type="function">
    <text evidence="1">Accelerates the degradation of transcripts by removing pyrophosphate from the 5'-end of triphosphorylated RNA, leading to a more labile monophosphorylated state that can stimulate subsequent ribonuclease cleavage.</text>
</comment>
<comment type="cofactor">
    <cofactor evidence="1">
        <name>a divalent metal cation</name>
        <dbReference type="ChEBI" id="CHEBI:60240"/>
    </cofactor>
</comment>
<comment type="similarity">
    <text evidence="1">Belongs to the Nudix hydrolase family. RppH subfamily.</text>
</comment>
<dbReference type="EC" id="3.6.1.-" evidence="1"/>
<dbReference type="EMBL" id="AE007869">
    <property type="protein sequence ID" value="AAK88487.2"/>
    <property type="molecule type" value="Genomic_DNA"/>
</dbReference>
<dbReference type="PIR" id="AC2917">
    <property type="entry name" value="AC2917"/>
</dbReference>
<dbReference type="PIR" id="F97691">
    <property type="entry name" value="F97691"/>
</dbReference>
<dbReference type="RefSeq" id="NP_355702.2">
    <property type="nucleotide sequence ID" value="NC_003062.2"/>
</dbReference>
<dbReference type="RefSeq" id="WP_010972555.1">
    <property type="nucleotide sequence ID" value="NC_003062.2"/>
</dbReference>
<dbReference type="SMR" id="Q8UBS8"/>
<dbReference type="STRING" id="176299.Atu2772"/>
<dbReference type="EnsemblBacteria" id="AAK88487">
    <property type="protein sequence ID" value="AAK88487"/>
    <property type="gene ID" value="Atu2772"/>
</dbReference>
<dbReference type="GeneID" id="1134810"/>
<dbReference type="KEGG" id="atu:Atu2772"/>
<dbReference type="PATRIC" id="fig|176299.10.peg.2782"/>
<dbReference type="eggNOG" id="COG0494">
    <property type="taxonomic scope" value="Bacteria"/>
</dbReference>
<dbReference type="HOGENOM" id="CLU_087195_3_0_5"/>
<dbReference type="OrthoDB" id="9816040at2"/>
<dbReference type="PhylomeDB" id="Q8UBS8"/>
<dbReference type="BioCyc" id="AGRO:ATU2772-MONOMER"/>
<dbReference type="Proteomes" id="UP000000813">
    <property type="component" value="Chromosome circular"/>
</dbReference>
<dbReference type="GO" id="GO:0034432">
    <property type="term" value="F:bis(5'-adenosyl)-pentaphosphatase activity"/>
    <property type="evidence" value="ECO:0007669"/>
    <property type="project" value="TreeGrafter"/>
</dbReference>
<dbReference type="GO" id="GO:0008893">
    <property type="term" value="F:guanosine-3',5'-bis(diphosphate) 3'-diphosphatase activity"/>
    <property type="evidence" value="ECO:0007669"/>
    <property type="project" value="TreeGrafter"/>
</dbReference>
<dbReference type="GO" id="GO:0006753">
    <property type="term" value="P:nucleoside phosphate metabolic process"/>
    <property type="evidence" value="ECO:0007669"/>
    <property type="project" value="TreeGrafter"/>
</dbReference>
<dbReference type="GO" id="GO:0019693">
    <property type="term" value="P:ribose phosphate metabolic process"/>
    <property type="evidence" value="ECO:0007669"/>
    <property type="project" value="TreeGrafter"/>
</dbReference>
<dbReference type="CDD" id="cd03671">
    <property type="entry name" value="NUDIX_Ap4A_hydrolase_plant_like"/>
    <property type="match status" value="1"/>
</dbReference>
<dbReference type="Gene3D" id="3.90.79.10">
    <property type="entry name" value="Nucleoside Triphosphate Pyrophosphohydrolase"/>
    <property type="match status" value="1"/>
</dbReference>
<dbReference type="HAMAP" id="MF_00298">
    <property type="entry name" value="Nudix_RppH"/>
    <property type="match status" value="1"/>
</dbReference>
<dbReference type="InterPro" id="IPR020476">
    <property type="entry name" value="Nudix_hydrolase"/>
</dbReference>
<dbReference type="InterPro" id="IPR015797">
    <property type="entry name" value="NUDIX_hydrolase-like_dom_sf"/>
</dbReference>
<dbReference type="InterPro" id="IPR020084">
    <property type="entry name" value="NUDIX_hydrolase_CS"/>
</dbReference>
<dbReference type="InterPro" id="IPR000086">
    <property type="entry name" value="NUDIX_hydrolase_dom"/>
</dbReference>
<dbReference type="InterPro" id="IPR022927">
    <property type="entry name" value="RppH"/>
</dbReference>
<dbReference type="NCBIfam" id="NF001938">
    <property type="entry name" value="PRK00714.1-5"/>
    <property type="match status" value="1"/>
</dbReference>
<dbReference type="PANTHER" id="PTHR11839:SF22">
    <property type="entry name" value="NUDIX HYDROLASE 26, CHLOROPLASTIC"/>
    <property type="match status" value="1"/>
</dbReference>
<dbReference type="PANTHER" id="PTHR11839">
    <property type="entry name" value="UDP/ADP-SUGAR PYROPHOSPHATASE"/>
    <property type="match status" value="1"/>
</dbReference>
<dbReference type="Pfam" id="PF00293">
    <property type="entry name" value="NUDIX"/>
    <property type="match status" value="1"/>
</dbReference>
<dbReference type="PRINTS" id="PR00502">
    <property type="entry name" value="NUDIXFAMILY"/>
</dbReference>
<dbReference type="SUPFAM" id="SSF55811">
    <property type="entry name" value="Nudix"/>
    <property type="match status" value="1"/>
</dbReference>
<dbReference type="PROSITE" id="PS51462">
    <property type="entry name" value="NUDIX"/>
    <property type="match status" value="1"/>
</dbReference>
<dbReference type="PROSITE" id="PS00893">
    <property type="entry name" value="NUDIX_BOX"/>
    <property type="match status" value="1"/>
</dbReference>
<feature type="chain" id="PRO_0000056991" description="RNA pyrophosphohydrolase">
    <location>
        <begin position="1"/>
        <end position="170"/>
    </location>
</feature>
<feature type="domain" description="Nudix hydrolase" evidence="1">
    <location>
        <begin position="9"/>
        <end position="162"/>
    </location>
</feature>
<feature type="short sequence motif" description="Nudix box">
    <location>
        <begin position="50"/>
        <end position="71"/>
    </location>
</feature>
<sequence>MTIKAEDLPYRPCAGIMVLNAQGLVWAGRRIKEGNSEYDGSPQLWQMPQGGIDDGERPLTAAIRELYEETGMKTVTLLAEASDWIHYDLPPELIGIGLRGKYRGQAQRWFAFRFEGDESEIQIDPPPTGHSAEFDAWDWKPMESLPELIVPFKRAVYEKVVAEFQHLSGK</sequence>
<protein>
    <recommendedName>
        <fullName evidence="1">RNA pyrophosphohydrolase</fullName>
        <ecNumber evidence="1">3.6.1.-</ecNumber>
    </recommendedName>
    <alternativeName>
        <fullName evidence="1">(Di)nucleoside polyphosphate hydrolase</fullName>
    </alternativeName>
</protein>